<dbReference type="EMBL" id="AE000516">
    <property type="protein sequence ID" value="AAK45875.1"/>
    <property type="molecule type" value="Genomic_DNA"/>
</dbReference>
<dbReference type="PIR" id="B70763">
    <property type="entry name" value="B70763"/>
</dbReference>
<dbReference type="SMR" id="P9WJU8"/>
<dbReference type="KEGG" id="mtc:MT1608"/>
<dbReference type="PATRIC" id="fig|83331.31.peg.1730"/>
<dbReference type="HOGENOM" id="CLU_005108_3_1_11"/>
<dbReference type="Proteomes" id="UP000001020">
    <property type="component" value="Chromosome"/>
</dbReference>
<dbReference type="GO" id="GO:0005886">
    <property type="term" value="C:plasma membrane"/>
    <property type="evidence" value="ECO:0007669"/>
    <property type="project" value="UniProtKB-SubCell"/>
</dbReference>
<dbReference type="FunFam" id="1.20.1640.10:FF:000018">
    <property type="entry name" value="Transmembrane transport protein MmpL10"/>
    <property type="match status" value="1"/>
</dbReference>
<dbReference type="Gene3D" id="1.20.1640.10">
    <property type="entry name" value="Multidrug efflux transporter AcrB transmembrane domain"/>
    <property type="match status" value="1"/>
</dbReference>
<dbReference type="InterPro" id="IPR004869">
    <property type="entry name" value="MMPL_dom"/>
</dbReference>
<dbReference type="InterPro" id="IPR050545">
    <property type="entry name" value="Mycobact_MmpL"/>
</dbReference>
<dbReference type="PANTHER" id="PTHR33406">
    <property type="entry name" value="MEMBRANE PROTEIN MJ1562-RELATED"/>
    <property type="match status" value="1"/>
</dbReference>
<dbReference type="PANTHER" id="PTHR33406:SF6">
    <property type="entry name" value="MEMBRANE PROTEIN YDGH-RELATED"/>
    <property type="match status" value="1"/>
</dbReference>
<dbReference type="Pfam" id="PF03176">
    <property type="entry name" value="MMPL"/>
    <property type="match status" value="1"/>
</dbReference>
<dbReference type="SUPFAM" id="SSF82866">
    <property type="entry name" value="Multidrug efflux transporter AcrB transmembrane domain"/>
    <property type="match status" value="1"/>
</dbReference>
<reference key="1">
    <citation type="journal article" date="2002" name="J. Bacteriol.">
        <title>Whole-genome comparison of Mycobacterium tuberculosis clinical and laboratory strains.</title>
        <authorList>
            <person name="Fleischmann R.D."/>
            <person name="Alland D."/>
            <person name="Eisen J.A."/>
            <person name="Carpenter L."/>
            <person name="White O."/>
            <person name="Peterson J.D."/>
            <person name="DeBoy R.T."/>
            <person name="Dodson R.J."/>
            <person name="Gwinn M.L."/>
            <person name="Haft D.H."/>
            <person name="Hickey E.K."/>
            <person name="Kolonay J.F."/>
            <person name="Nelson W.C."/>
            <person name="Umayam L.A."/>
            <person name="Ermolaeva M.D."/>
            <person name="Salzberg S.L."/>
            <person name="Delcher A."/>
            <person name="Utterback T.R."/>
            <person name="Weidman J.F."/>
            <person name="Khouri H.M."/>
            <person name="Gill J."/>
            <person name="Mikula A."/>
            <person name="Bishai W."/>
            <person name="Jacobs W.R. Jr."/>
            <person name="Venter J.C."/>
            <person name="Fraser C.M."/>
        </authorList>
    </citation>
    <scope>NUCLEOTIDE SEQUENCE [LARGE SCALE GENOMIC DNA]</scope>
    <source>
        <strain>CDC 1551 / Oshkosh</strain>
    </source>
</reference>
<feature type="chain" id="PRO_0000427767" description="Probable transport protein MmpL6">
    <location>
        <begin position="1"/>
        <end position="397"/>
    </location>
</feature>
<feature type="transmembrane region" description="Helical" evidence="1">
    <location>
        <begin position="190"/>
        <end position="210"/>
    </location>
</feature>
<feature type="transmembrane region" description="Helical" evidence="1">
    <location>
        <begin position="214"/>
        <end position="234"/>
    </location>
</feature>
<feature type="transmembrane region" description="Helical" evidence="1">
    <location>
        <begin position="242"/>
        <end position="262"/>
    </location>
</feature>
<feature type="transmembrane region" description="Helical" evidence="1">
    <location>
        <begin position="293"/>
        <end position="313"/>
    </location>
</feature>
<feature type="transmembrane region" description="Helical" evidence="1">
    <location>
        <begin position="328"/>
        <end position="348"/>
    </location>
</feature>
<organism>
    <name type="scientific">Mycobacterium tuberculosis (strain CDC 1551 / Oshkosh)</name>
    <dbReference type="NCBI Taxonomy" id="83331"/>
    <lineage>
        <taxon>Bacteria</taxon>
        <taxon>Bacillati</taxon>
        <taxon>Actinomycetota</taxon>
        <taxon>Actinomycetes</taxon>
        <taxon>Mycobacteriales</taxon>
        <taxon>Mycobacteriaceae</taxon>
        <taxon>Mycobacterium</taxon>
        <taxon>Mycobacterium tuberculosis complex</taxon>
    </lineage>
</organism>
<sequence>MQGISVTGLVKRGWMVRSVFDTIDGIDQLGEQLASVTVTLDKLAAIQPQLVALLPDEIASQQINRELALANYATMSGIYAQTAALIENAAAMGQAFDAAKNDDSFYLPPEAFDNPDFQRGLKLFLSADGKAARMIISHEGDPATPEGISHIDAIKQAAHEAVKGTPMAGAGIYLAGTAATFKDIQDGATYDLLIAGIAALSLILLIMMIITRSLVAALVIVGTVALSLGASFGLSVLVWQHLLGIQLYWIVLALAVILLLAVGSDYNLLLISRFKEEIGAGLNTGIIRAMAGTGGVVTAAGLVFAATMSSFVFSDLRVLGQIGTTIGLGLLFDTLVVRAFMTPSIAVLLGRWFWWPQRVRPRPASRMLRPYGPRPVVRELLLREGNDDPRTQVATHR</sequence>
<gene>
    <name type="primary">mmpL6</name>
    <name type="ordered locus">MT1608</name>
</gene>
<name>MMPL6_MYCTO</name>
<protein>
    <recommendedName>
        <fullName evidence="2">Probable transport protein MmpL6</fullName>
    </recommendedName>
</protein>
<keyword id="KW-1003">Cell membrane</keyword>
<keyword id="KW-0472">Membrane</keyword>
<keyword id="KW-1185">Reference proteome</keyword>
<keyword id="KW-0812">Transmembrane</keyword>
<keyword id="KW-1133">Transmembrane helix</keyword>
<keyword id="KW-0813">Transport</keyword>
<accession>P9WJU8</accession>
<accession>L0T707</accession>
<accession>Q10773</accession>
<evidence type="ECO:0000255" key="1"/>
<evidence type="ECO:0000305" key="2"/>
<comment type="subcellular location">
    <subcellularLocation>
        <location evidence="2">Cell membrane</location>
        <topology evidence="1">Multi-pass membrane protein</topology>
    </subcellularLocation>
</comment>
<comment type="similarity">
    <text evidence="2">Belongs to the resistance-nodulation-cell division (RND) (TC 2.A.6) family. MmpL subfamily.</text>
</comment>
<proteinExistence type="inferred from homology"/>